<name>PANB1_BURL3</name>
<comment type="function">
    <text evidence="1">Catalyzes the reversible reaction in which hydroxymethyl group from 5,10-methylenetetrahydrofolate is transferred onto alpha-ketoisovalerate to form ketopantoate.</text>
</comment>
<comment type="catalytic activity">
    <reaction evidence="1">
        <text>3-methyl-2-oxobutanoate + (6R)-5,10-methylene-5,6,7,8-tetrahydrofolate + H2O = 2-dehydropantoate + (6S)-5,6,7,8-tetrahydrofolate</text>
        <dbReference type="Rhea" id="RHEA:11824"/>
        <dbReference type="ChEBI" id="CHEBI:11561"/>
        <dbReference type="ChEBI" id="CHEBI:11851"/>
        <dbReference type="ChEBI" id="CHEBI:15377"/>
        <dbReference type="ChEBI" id="CHEBI:15636"/>
        <dbReference type="ChEBI" id="CHEBI:57453"/>
        <dbReference type="EC" id="2.1.2.11"/>
    </reaction>
</comment>
<comment type="cofactor">
    <cofactor evidence="1">
        <name>Mg(2+)</name>
        <dbReference type="ChEBI" id="CHEBI:18420"/>
    </cofactor>
    <text evidence="1">Binds 1 Mg(2+) ion per subunit.</text>
</comment>
<comment type="pathway">
    <text evidence="1">Cofactor biosynthesis; (R)-pantothenate biosynthesis; (R)-pantoate from 3-methyl-2-oxobutanoate: step 1/2.</text>
</comment>
<comment type="subunit">
    <text evidence="1">Homodecamer; pentamer of dimers.</text>
</comment>
<comment type="subcellular location">
    <subcellularLocation>
        <location evidence="1">Cytoplasm</location>
    </subcellularLocation>
</comment>
<comment type="similarity">
    <text evidence="1">Belongs to the PanB family.</text>
</comment>
<proteinExistence type="inferred from homology"/>
<organism>
    <name type="scientific">Burkholderia lata (strain ATCC 17760 / DSM 23089 / LMG 22485 / NCIMB 9086 / R18194 / 383)</name>
    <dbReference type="NCBI Taxonomy" id="482957"/>
    <lineage>
        <taxon>Bacteria</taxon>
        <taxon>Pseudomonadati</taxon>
        <taxon>Pseudomonadota</taxon>
        <taxon>Betaproteobacteria</taxon>
        <taxon>Burkholderiales</taxon>
        <taxon>Burkholderiaceae</taxon>
        <taxon>Burkholderia</taxon>
        <taxon>Burkholderia cepacia complex</taxon>
    </lineage>
</organism>
<feature type="chain" id="PRO_0000297235" description="3-methyl-2-oxobutanoate hydroxymethyltransferase 1">
    <location>
        <begin position="1"/>
        <end position="285"/>
    </location>
</feature>
<feature type="active site" description="Proton acceptor" evidence="1">
    <location>
        <position position="187"/>
    </location>
</feature>
<feature type="binding site" evidence="1">
    <location>
        <begin position="49"/>
        <end position="50"/>
    </location>
    <ligand>
        <name>3-methyl-2-oxobutanoate</name>
        <dbReference type="ChEBI" id="CHEBI:11851"/>
    </ligand>
</feature>
<feature type="binding site" evidence="1">
    <location>
        <position position="49"/>
    </location>
    <ligand>
        <name>Mg(2+)</name>
        <dbReference type="ChEBI" id="CHEBI:18420"/>
    </ligand>
</feature>
<feature type="binding site" evidence="1">
    <location>
        <position position="88"/>
    </location>
    <ligand>
        <name>3-methyl-2-oxobutanoate</name>
        <dbReference type="ChEBI" id="CHEBI:11851"/>
    </ligand>
</feature>
<feature type="binding site" evidence="1">
    <location>
        <position position="88"/>
    </location>
    <ligand>
        <name>Mg(2+)</name>
        <dbReference type="ChEBI" id="CHEBI:18420"/>
    </ligand>
</feature>
<feature type="binding site" evidence="1">
    <location>
        <position position="118"/>
    </location>
    <ligand>
        <name>3-methyl-2-oxobutanoate</name>
        <dbReference type="ChEBI" id="CHEBI:11851"/>
    </ligand>
</feature>
<feature type="binding site" evidence="1">
    <location>
        <position position="120"/>
    </location>
    <ligand>
        <name>Mg(2+)</name>
        <dbReference type="ChEBI" id="CHEBI:18420"/>
    </ligand>
</feature>
<dbReference type="EC" id="2.1.2.11" evidence="1"/>
<dbReference type="EMBL" id="CP000152">
    <property type="protein sequence ID" value="ABB12833.1"/>
    <property type="molecule type" value="Genomic_DNA"/>
</dbReference>
<dbReference type="RefSeq" id="WP_011356313.1">
    <property type="nucleotide sequence ID" value="NC_007511.1"/>
</dbReference>
<dbReference type="SMR" id="Q391N3"/>
<dbReference type="GeneID" id="45099033"/>
<dbReference type="KEGG" id="bur:Bcep18194_B2722"/>
<dbReference type="PATRIC" id="fig|482957.22.peg.6526"/>
<dbReference type="HOGENOM" id="CLU_036645_1_0_4"/>
<dbReference type="UniPathway" id="UPA00028">
    <property type="reaction ID" value="UER00003"/>
</dbReference>
<dbReference type="Proteomes" id="UP000002705">
    <property type="component" value="Chromosome 2"/>
</dbReference>
<dbReference type="GO" id="GO:0005737">
    <property type="term" value="C:cytoplasm"/>
    <property type="evidence" value="ECO:0007669"/>
    <property type="project" value="UniProtKB-SubCell"/>
</dbReference>
<dbReference type="GO" id="GO:0003864">
    <property type="term" value="F:3-methyl-2-oxobutanoate hydroxymethyltransferase activity"/>
    <property type="evidence" value="ECO:0007669"/>
    <property type="project" value="UniProtKB-UniRule"/>
</dbReference>
<dbReference type="GO" id="GO:0000287">
    <property type="term" value="F:magnesium ion binding"/>
    <property type="evidence" value="ECO:0007669"/>
    <property type="project" value="TreeGrafter"/>
</dbReference>
<dbReference type="GO" id="GO:0015940">
    <property type="term" value="P:pantothenate biosynthetic process"/>
    <property type="evidence" value="ECO:0007669"/>
    <property type="project" value="UniProtKB-UniRule"/>
</dbReference>
<dbReference type="CDD" id="cd06557">
    <property type="entry name" value="KPHMT-like"/>
    <property type="match status" value="1"/>
</dbReference>
<dbReference type="FunFam" id="3.20.20.60:FF:000003">
    <property type="entry name" value="3-methyl-2-oxobutanoate hydroxymethyltransferase"/>
    <property type="match status" value="1"/>
</dbReference>
<dbReference type="Gene3D" id="3.20.20.60">
    <property type="entry name" value="Phosphoenolpyruvate-binding domains"/>
    <property type="match status" value="1"/>
</dbReference>
<dbReference type="HAMAP" id="MF_00156">
    <property type="entry name" value="PanB"/>
    <property type="match status" value="1"/>
</dbReference>
<dbReference type="InterPro" id="IPR003700">
    <property type="entry name" value="Pantoate_hydroxy_MeTrfase"/>
</dbReference>
<dbReference type="InterPro" id="IPR015813">
    <property type="entry name" value="Pyrv/PenolPyrv_kinase-like_dom"/>
</dbReference>
<dbReference type="InterPro" id="IPR040442">
    <property type="entry name" value="Pyrv_kinase-like_dom_sf"/>
</dbReference>
<dbReference type="NCBIfam" id="TIGR00222">
    <property type="entry name" value="panB"/>
    <property type="match status" value="1"/>
</dbReference>
<dbReference type="NCBIfam" id="NF001452">
    <property type="entry name" value="PRK00311.1"/>
    <property type="match status" value="1"/>
</dbReference>
<dbReference type="PANTHER" id="PTHR20881">
    <property type="entry name" value="3-METHYL-2-OXOBUTANOATE HYDROXYMETHYLTRANSFERASE"/>
    <property type="match status" value="1"/>
</dbReference>
<dbReference type="PANTHER" id="PTHR20881:SF0">
    <property type="entry name" value="3-METHYL-2-OXOBUTANOATE HYDROXYMETHYLTRANSFERASE"/>
    <property type="match status" value="1"/>
</dbReference>
<dbReference type="Pfam" id="PF02548">
    <property type="entry name" value="Pantoate_transf"/>
    <property type="match status" value="1"/>
</dbReference>
<dbReference type="PIRSF" id="PIRSF000388">
    <property type="entry name" value="Pantoate_hydroxy_MeTrfase"/>
    <property type="match status" value="1"/>
</dbReference>
<dbReference type="SUPFAM" id="SSF51621">
    <property type="entry name" value="Phosphoenolpyruvate/pyruvate domain"/>
    <property type="match status" value="1"/>
</dbReference>
<accession>Q391N3</accession>
<evidence type="ECO:0000255" key="1">
    <source>
        <dbReference type="HAMAP-Rule" id="MF_00156"/>
    </source>
</evidence>
<sequence>MSAHTRTTRKTVTAIRSTKGIGSLVSLTAYSAPMAKLVDEVADVIIVGDSVGMVLYGMPDTLRVTLDMMIAHGAAVVRGAAQACVVVDLPFSTYQESPAQAYRSAARLLAETGAQGVKLEGGTEMADAIRFLTERGIPVMAHVGLMPQQANATGGFRAQGMDPRSAAQVFDAACSAEQAGAFSVVIEGTAEALARHITETLTIPTIGIGASPACDGQVLVTEDMIGAFDAYTPRFVKRYADANAVMRDAIRQYAHDVRQGVFPEPAHCFGYGKPLQLVGAADAAA</sequence>
<keyword id="KW-0963">Cytoplasm</keyword>
<keyword id="KW-0460">Magnesium</keyword>
<keyword id="KW-0479">Metal-binding</keyword>
<keyword id="KW-0566">Pantothenate biosynthesis</keyword>
<keyword id="KW-0808">Transferase</keyword>
<protein>
    <recommendedName>
        <fullName evidence="1">3-methyl-2-oxobutanoate hydroxymethyltransferase 1</fullName>
        <ecNumber evidence="1">2.1.2.11</ecNumber>
    </recommendedName>
    <alternativeName>
        <fullName evidence="1">Ketopantoate hydroxymethyltransferase 1</fullName>
        <shortName evidence="1">KPHMT 1</shortName>
    </alternativeName>
</protein>
<gene>
    <name evidence="1" type="primary">panB1</name>
    <name type="ordered locus">Bcep18194_B2722</name>
</gene>
<reference key="1">
    <citation type="submission" date="2005-10" db="EMBL/GenBank/DDBJ databases">
        <title>Complete sequence of chromosome 2 of Burkholderia sp. 383.</title>
        <authorList>
            <consortium name="US DOE Joint Genome Institute"/>
            <person name="Copeland A."/>
            <person name="Lucas S."/>
            <person name="Lapidus A."/>
            <person name="Barry K."/>
            <person name="Detter J.C."/>
            <person name="Glavina T."/>
            <person name="Hammon N."/>
            <person name="Israni S."/>
            <person name="Pitluck S."/>
            <person name="Chain P."/>
            <person name="Malfatti S."/>
            <person name="Shin M."/>
            <person name="Vergez L."/>
            <person name="Schmutz J."/>
            <person name="Larimer F."/>
            <person name="Land M."/>
            <person name="Kyrpides N."/>
            <person name="Lykidis A."/>
            <person name="Richardson P."/>
        </authorList>
    </citation>
    <scope>NUCLEOTIDE SEQUENCE [LARGE SCALE GENOMIC DNA]</scope>
    <source>
        <strain>ATCC 17760 / DSM 23089 / LMG 22485 / NCIMB 9086 / R18194 / 383</strain>
    </source>
</reference>